<comment type="function">
    <text evidence="1">NDH-1 shuttles electrons from NADH, via FMN and iron-sulfur (Fe-S) centers, to quinones in the respiratory chain. The immediate electron acceptor for the enzyme in this species is believed to be a menaquinone. Couples the redox reaction to proton translocation (for every two electrons transferred, four hydrogen ions are translocated across the cytoplasmic membrane), and thus conserves the redox energy in a proton gradient.</text>
</comment>
<comment type="catalytic activity">
    <reaction evidence="1">
        <text>a quinone + NADH + 5 H(+)(in) = a quinol + NAD(+) + 4 H(+)(out)</text>
        <dbReference type="Rhea" id="RHEA:57888"/>
        <dbReference type="ChEBI" id="CHEBI:15378"/>
        <dbReference type="ChEBI" id="CHEBI:24646"/>
        <dbReference type="ChEBI" id="CHEBI:57540"/>
        <dbReference type="ChEBI" id="CHEBI:57945"/>
        <dbReference type="ChEBI" id="CHEBI:132124"/>
    </reaction>
</comment>
<comment type="subunit">
    <text evidence="1">NDH-1 is composed of 14 different subunits. Subunits NuoB, C, D, E, F, and G constitute the peripheral sector of the complex.</text>
</comment>
<comment type="subcellular location">
    <subcellularLocation>
        <location evidence="1">Cell membrane</location>
        <topology evidence="1">Peripheral membrane protein</topology>
        <orientation evidence="1">Cytoplasmic side</orientation>
    </subcellularLocation>
</comment>
<comment type="similarity">
    <text evidence="1">Belongs to the complex I 49 kDa subunit family.</text>
</comment>
<reference key="1">
    <citation type="submission" date="2006-10" db="EMBL/GenBank/DDBJ databases">
        <authorList>
            <person name="Fleischmann R.D."/>
            <person name="Dodson R.J."/>
            <person name="Haft D.H."/>
            <person name="Merkel J.S."/>
            <person name="Nelson W.C."/>
            <person name="Fraser C.M."/>
        </authorList>
    </citation>
    <scope>NUCLEOTIDE SEQUENCE [LARGE SCALE GENOMIC DNA]</scope>
    <source>
        <strain>ATCC 700084 / mc(2)155</strain>
    </source>
</reference>
<reference key="2">
    <citation type="journal article" date="2007" name="Genome Biol.">
        <title>Interrupted coding sequences in Mycobacterium smegmatis: authentic mutations or sequencing errors?</title>
        <authorList>
            <person name="Deshayes C."/>
            <person name="Perrodou E."/>
            <person name="Gallien S."/>
            <person name="Euphrasie D."/>
            <person name="Schaeffer C."/>
            <person name="Van-Dorsselaer A."/>
            <person name="Poch O."/>
            <person name="Lecompte O."/>
            <person name="Reyrat J.-M."/>
        </authorList>
    </citation>
    <scope>NUCLEOTIDE SEQUENCE [LARGE SCALE GENOMIC DNA]</scope>
    <source>
        <strain>ATCC 700084 / mc(2)155</strain>
    </source>
</reference>
<reference key="3">
    <citation type="journal article" date="2009" name="Genome Res.">
        <title>Ortho-proteogenomics: multiple proteomes investigation through orthology and a new MS-based protocol.</title>
        <authorList>
            <person name="Gallien S."/>
            <person name="Perrodou E."/>
            <person name="Carapito C."/>
            <person name="Deshayes C."/>
            <person name="Reyrat J.-M."/>
            <person name="Van Dorsselaer A."/>
            <person name="Poch O."/>
            <person name="Schaeffer C."/>
            <person name="Lecompte O."/>
        </authorList>
    </citation>
    <scope>NUCLEOTIDE SEQUENCE [LARGE SCALE GENOMIC DNA]</scope>
    <source>
        <strain>ATCC 700084 / mc(2)155</strain>
    </source>
</reference>
<sequence length="442" mass="48498">MSTSTVPPDGGEKVVVVGGNDWHEVVAAARAGAAAQAGERIVVNMGPQHPSTHGVLRLILEIEGEIITEARCGIGYLHTGIEKNLEYRNWTQGVTFVTRMDYLSPFFNETAYCLGVEKLLGITDDIPERASVIRVMLMELNRISSHLVALATGGMELGAMSAMFYGFREREEILRVFESITGLRMNHAYIRPGGLAADLPDDAITQVRRLVEILPKRLKDLEDLLNENYIWKARTVGVGYLDLTGCMALGITGPILRSTGLPHDLRKAQPYCGYENYEFDVITDDRCDSYGRYIIRVKEMHESVKIVEQCLARLKPGPVMISDKKLAWPADLKLGPDGLGNSPEHIAKIMGRSMEGLIHHFKLVTEGIRVPPGQVYVAVESPRGELGVHMVSDGGTRPYRVHYRDPSFTNLQAVAATCEGGMVADAIAAVASIDPVMGGVDR</sequence>
<proteinExistence type="evidence at protein level"/>
<gene>
    <name evidence="1" type="primary">nuoD</name>
    <name type="ordered locus">MSMEG_2060</name>
    <name type="ordered locus">MSMEI_2015</name>
</gene>
<evidence type="ECO:0000255" key="1">
    <source>
        <dbReference type="HAMAP-Rule" id="MF_01358"/>
    </source>
</evidence>
<evidence type="ECO:0007829" key="2">
    <source>
        <dbReference type="PDB" id="8E9G"/>
    </source>
</evidence>
<evidence type="ECO:0007829" key="3">
    <source>
        <dbReference type="PDB" id="8E9H"/>
    </source>
</evidence>
<evidence type="ECO:0007829" key="4">
    <source>
        <dbReference type="PDB" id="8E9I"/>
    </source>
</evidence>
<accession>A0QU33</accession>
<accession>I7G5L9</accession>
<organism>
    <name type="scientific">Mycolicibacterium smegmatis (strain ATCC 700084 / mc(2)155)</name>
    <name type="common">Mycobacterium smegmatis</name>
    <dbReference type="NCBI Taxonomy" id="246196"/>
    <lineage>
        <taxon>Bacteria</taxon>
        <taxon>Bacillati</taxon>
        <taxon>Actinomycetota</taxon>
        <taxon>Actinomycetes</taxon>
        <taxon>Mycobacteriales</taxon>
        <taxon>Mycobacteriaceae</taxon>
        <taxon>Mycolicibacterium</taxon>
    </lineage>
</organism>
<dbReference type="EC" id="7.1.1.-" evidence="1"/>
<dbReference type="EMBL" id="CP000480">
    <property type="protein sequence ID" value="ABK76078.1"/>
    <property type="molecule type" value="Genomic_DNA"/>
</dbReference>
<dbReference type="EMBL" id="CP001663">
    <property type="protein sequence ID" value="AFP38486.1"/>
    <property type="molecule type" value="Genomic_DNA"/>
</dbReference>
<dbReference type="RefSeq" id="WP_011728123.1">
    <property type="nucleotide sequence ID" value="NZ_SIJM01000021.1"/>
</dbReference>
<dbReference type="RefSeq" id="YP_886421.1">
    <property type="nucleotide sequence ID" value="NC_008596.1"/>
</dbReference>
<dbReference type="PDB" id="8E9G">
    <property type="method" value="EM"/>
    <property type="resolution" value="2.60 A"/>
    <property type="chains" value="D=1-442"/>
</dbReference>
<dbReference type="PDB" id="8E9H">
    <property type="method" value="EM"/>
    <property type="resolution" value="2.70 A"/>
    <property type="chains" value="D=1-442"/>
</dbReference>
<dbReference type="PDB" id="8E9I">
    <property type="method" value="EM"/>
    <property type="resolution" value="2.80 A"/>
    <property type="chains" value="D=1-442"/>
</dbReference>
<dbReference type="PDBsum" id="8E9G"/>
<dbReference type="PDBsum" id="8E9H"/>
<dbReference type="PDBsum" id="8E9I"/>
<dbReference type="EMDB" id="EMD-27963"/>
<dbReference type="EMDB" id="EMD-27964"/>
<dbReference type="EMDB" id="EMD-27965"/>
<dbReference type="SMR" id="A0QU33"/>
<dbReference type="STRING" id="246196.MSMEG_2060"/>
<dbReference type="PaxDb" id="246196-MSMEI_2015"/>
<dbReference type="GeneID" id="93456864"/>
<dbReference type="KEGG" id="msb:LJ00_10270"/>
<dbReference type="KEGG" id="msg:MSMEI_2015"/>
<dbReference type="KEGG" id="msm:MSMEG_2060"/>
<dbReference type="PATRIC" id="fig|246196.19.peg.2036"/>
<dbReference type="eggNOG" id="COG0649">
    <property type="taxonomic scope" value="Bacteria"/>
</dbReference>
<dbReference type="OrthoDB" id="9801496at2"/>
<dbReference type="Proteomes" id="UP000000757">
    <property type="component" value="Chromosome"/>
</dbReference>
<dbReference type="Proteomes" id="UP000006158">
    <property type="component" value="Chromosome"/>
</dbReference>
<dbReference type="GO" id="GO:0005886">
    <property type="term" value="C:plasma membrane"/>
    <property type="evidence" value="ECO:0007669"/>
    <property type="project" value="UniProtKB-SubCell"/>
</dbReference>
<dbReference type="GO" id="GO:0051287">
    <property type="term" value="F:NAD binding"/>
    <property type="evidence" value="ECO:0007669"/>
    <property type="project" value="InterPro"/>
</dbReference>
<dbReference type="GO" id="GO:0050136">
    <property type="term" value="F:NADH:ubiquinone reductase (non-electrogenic) activity"/>
    <property type="evidence" value="ECO:0007669"/>
    <property type="project" value="UniProtKB-UniRule"/>
</dbReference>
<dbReference type="GO" id="GO:0048038">
    <property type="term" value="F:quinone binding"/>
    <property type="evidence" value="ECO:0007669"/>
    <property type="project" value="UniProtKB-KW"/>
</dbReference>
<dbReference type="Gene3D" id="1.10.645.10">
    <property type="entry name" value="Cytochrome-c3 Hydrogenase, chain B"/>
    <property type="match status" value="1"/>
</dbReference>
<dbReference type="HAMAP" id="MF_01358">
    <property type="entry name" value="NDH1_NuoD"/>
    <property type="match status" value="1"/>
</dbReference>
<dbReference type="InterPro" id="IPR001135">
    <property type="entry name" value="NADH_Q_OxRdtase_suD"/>
</dbReference>
<dbReference type="InterPro" id="IPR014029">
    <property type="entry name" value="NADH_UbQ_OxRdtase_49kDa_CS"/>
</dbReference>
<dbReference type="InterPro" id="IPR022885">
    <property type="entry name" value="NDH1_su_D/H"/>
</dbReference>
<dbReference type="InterPro" id="IPR029014">
    <property type="entry name" value="NiFe-Hase_large"/>
</dbReference>
<dbReference type="NCBIfam" id="TIGR01962">
    <property type="entry name" value="NuoD"/>
    <property type="match status" value="1"/>
</dbReference>
<dbReference type="NCBIfam" id="NF004739">
    <property type="entry name" value="PRK06075.1"/>
    <property type="match status" value="1"/>
</dbReference>
<dbReference type="PANTHER" id="PTHR11993:SF10">
    <property type="entry name" value="NADH DEHYDROGENASE [UBIQUINONE] IRON-SULFUR PROTEIN 2, MITOCHONDRIAL"/>
    <property type="match status" value="1"/>
</dbReference>
<dbReference type="PANTHER" id="PTHR11993">
    <property type="entry name" value="NADH-UBIQUINONE OXIDOREDUCTASE 49 KDA SUBUNIT"/>
    <property type="match status" value="1"/>
</dbReference>
<dbReference type="Pfam" id="PF00346">
    <property type="entry name" value="Complex1_49kDa"/>
    <property type="match status" value="1"/>
</dbReference>
<dbReference type="SUPFAM" id="SSF56762">
    <property type="entry name" value="HydB/Nqo4-like"/>
    <property type="match status" value="1"/>
</dbReference>
<dbReference type="PROSITE" id="PS00535">
    <property type="entry name" value="COMPLEX1_49K"/>
    <property type="match status" value="1"/>
</dbReference>
<protein>
    <recommendedName>
        <fullName evidence="1">NADH-quinone oxidoreductase subunit D</fullName>
        <ecNumber evidence="1">7.1.1.-</ecNumber>
    </recommendedName>
    <alternativeName>
        <fullName evidence="1">NADH dehydrogenase I subunit D</fullName>
    </alternativeName>
    <alternativeName>
        <fullName evidence="1">NDH-1 subunit D</fullName>
    </alternativeName>
</protein>
<name>NUOD_MYCS2</name>
<feature type="chain" id="PRO_0000357858" description="NADH-quinone oxidoreductase subunit D">
    <location>
        <begin position="1"/>
        <end position="442"/>
    </location>
</feature>
<feature type="helix" evidence="3">
    <location>
        <begin position="37"/>
        <end position="39"/>
    </location>
</feature>
<feature type="strand" evidence="2">
    <location>
        <begin position="41"/>
        <end position="44"/>
    </location>
</feature>
<feature type="strand" evidence="2">
    <location>
        <begin position="47"/>
        <end position="49"/>
    </location>
</feature>
<feature type="turn" evidence="2">
    <location>
        <begin position="50"/>
        <end position="55"/>
    </location>
</feature>
<feature type="strand" evidence="2">
    <location>
        <begin position="57"/>
        <end position="63"/>
    </location>
</feature>
<feature type="strand" evidence="2">
    <location>
        <begin position="66"/>
        <end position="73"/>
    </location>
</feature>
<feature type="helix" evidence="2">
    <location>
        <begin position="81"/>
        <end position="85"/>
    </location>
</feature>
<feature type="turn" evidence="2">
    <location>
        <begin position="90"/>
        <end position="92"/>
    </location>
</feature>
<feature type="helix" evidence="2">
    <location>
        <begin position="93"/>
        <end position="97"/>
    </location>
</feature>
<feature type="turn" evidence="4">
    <location>
        <begin position="101"/>
        <end position="103"/>
    </location>
</feature>
<feature type="helix" evidence="2">
    <location>
        <begin position="105"/>
        <end position="120"/>
    </location>
</feature>
<feature type="helix" evidence="2">
    <location>
        <begin position="123"/>
        <end position="125"/>
    </location>
</feature>
<feature type="helix" evidence="2">
    <location>
        <begin position="128"/>
        <end position="156"/>
    </location>
</feature>
<feature type="helix" evidence="2">
    <location>
        <begin position="160"/>
        <end position="181"/>
    </location>
</feature>
<feature type="strand" evidence="2">
    <location>
        <begin position="184"/>
        <end position="186"/>
    </location>
</feature>
<feature type="strand" evidence="2">
    <location>
        <begin position="194"/>
        <end position="197"/>
    </location>
</feature>
<feature type="helix" evidence="2">
    <location>
        <begin position="203"/>
        <end position="225"/>
    </location>
</feature>
<feature type="helix" evidence="2">
    <location>
        <begin position="229"/>
        <end position="235"/>
    </location>
</feature>
<feature type="turn" evidence="4">
    <location>
        <begin position="236"/>
        <end position="239"/>
    </location>
</feature>
<feature type="helix" evidence="2">
    <location>
        <begin position="243"/>
        <end position="249"/>
    </location>
</feature>
<feature type="helix" evidence="2">
    <location>
        <begin position="254"/>
        <end position="257"/>
    </location>
</feature>
<feature type="turn" evidence="2">
    <location>
        <begin position="258"/>
        <end position="260"/>
    </location>
</feature>
<feature type="turn" evidence="2">
    <location>
        <begin position="265"/>
        <end position="267"/>
    </location>
</feature>
<feature type="helix" evidence="2">
    <location>
        <begin position="274"/>
        <end position="276"/>
    </location>
</feature>
<feature type="helix" evidence="2">
    <location>
        <begin position="289"/>
        <end position="313"/>
    </location>
</feature>
<feature type="turn" evidence="2">
    <location>
        <begin position="324"/>
        <end position="326"/>
    </location>
</feature>
<feature type="strand" evidence="2">
    <location>
        <begin position="332"/>
        <end position="335"/>
    </location>
</feature>
<feature type="strand" evidence="2">
    <location>
        <begin position="338"/>
        <end position="341"/>
    </location>
</feature>
<feature type="helix" evidence="2">
    <location>
        <begin position="343"/>
        <end position="351"/>
    </location>
</feature>
<feature type="helix" evidence="2">
    <location>
        <begin position="354"/>
        <end position="365"/>
    </location>
</feature>
<feature type="strand" evidence="2">
    <location>
        <begin position="372"/>
        <end position="381"/>
    </location>
</feature>
<feature type="strand" evidence="2">
    <location>
        <begin position="384"/>
        <end position="392"/>
    </location>
</feature>
<feature type="strand" evidence="2">
    <location>
        <begin position="394"/>
        <end position="397"/>
    </location>
</feature>
<feature type="strand" evidence="2">
    <location>
        <begin position="399"/>
        <end position="404"/>
    </location>
</feature>
<feature type="helix" evidence="2">
    <location>
        <begin position="406"/>
        <end position="410"/>
    </location>
</feature>
<feature type="helix" evidence="2">
    <location>
        <begin position="411"/>
        <end position="413"/>
    </location>
</feature>
<feature type="helix" evidence="2">
    <location>
        <begin position="414"/>
        <end position="418"/>
    </location>
</feature>
<feature type="helix" evidence="2">
    <location>
        <begin position="423"/>
        <end position="433"/>
    </location>
</feature>
<feature type="helix" evidence="2">
    <location>
        <begin position="437"/>
        <end position="441"/>
    </location>
</feature>
<keyword id="KW-0002">3D-structure</keyword>
<keyword id="KW-1003">Cell membrane</keyword>
<keyword id="KW-0472">Membrane</keyword>
<keyword id="KW-0520">NAD</keyword>
<keyword id="KW-0874">Quinone</keyword>
<keyword id="KW-1185">Reference proteome</keyword>
<keyword id="KW-1278">Translocase</keyword>
<keyword id="KW-0813">Transport</keyword>